<gene>
    <name evidence="1" type="primary">pyrK</name>
    <name type="ordered locus">BT9727_3627</name>
</gene>
<organism>
    <name type="scientific">Bacillus thuringiensis subsp. konkukian (strain 97-27)</name>
    <dbReference type="NCBI Taxonomy" id="281309"/>
    <lineage>
        <taxon>Bacteria</taxon>
        <taxon>Bacillati</taxon>
        <taxon>Bacillota</taxon>
        <taxon>Bacilli</taxon>
        <taxon>Bacillales</taxon>
        <taxon>Bacillaceae</taxon>
        <taxon>Bacillus</taxon>
        <taxon>Bacillus cereus group</taxon>
    </lineage>
</organism>
<keyword id="KW-0001">2Fe-2S</keyword>
<keyword id="KW-0249">Electron transport</keyword>
<keyword id="KW-0274">FAD</keyword>
<keyword id="KW-0285">Flavoprotein</keyword>
<keyword id="KW-0408">Iron</keyword>
<keyword id="KW-0411">Iron-sulfur</keyword>
<keyword id="KW-0479">Metal-binding</keyword>
<keyword id="KW-0665">Pyrimidine biosynthesis</keyword>
<keyword id="KW-0813">Transport</keyword>
<dbReference type="EMBL" id="AE017355">
    <property type="protein sequence ID" value="AAT60634.1"/>
    <property type="molecule type" value="Genomic_DNA"/>
</dbReference>
<dbReference type="RefSeq" id="WP_000983358.1">
    <property type="nucleotide sequence ID" value="NC_005957.1"/>
</dbReference>
<dbReference type="RefSeq" id="YP_037947.1">
    <property type="nucleotide sequence ID" value="NC_005957.1"/>
</dbReference>
<dbReference type="SMR" id="Q6HES9"/>
<dbReference type="GeneID" id="75087022"/>
<dbReference type="KEGG" id="btk:BT9727_3627"/>
<dbReference type="PATRIC" id="fig|281309.8.peg.3865"/>
<dbReference type="HOGENOM" id="CLU_003827_1_2_9"/>
<dbReference type="UniPathway" id="UPA00070">
    <property type="reaction ID" value="UER00945"/>
</dbReference>
<dbReference type="Proteomes" id="UP000001301">
    <property type="component" value="Chromosome"/>
</dbReference>
<dbReference type="GO" id="GO:0051537">
    <property type="term" value="F:2 iron, 2 sulfur cluster binding"/>
    <property type="evidence" value="ECO:0007669"/>
    <property type="project" value="UniProtKB-KW"/>
</dbReference>
<dbReference type="GO" id="GO:0009055">
    <property type="term" value="F:electron transfer activity"/>
    <property type="evidence" value="ECO:0007669"/>
    <property type="project" value="UniProtKB-UniRule"/>
</dbReference>
<dbReference type="GO" id="GO:0050660">
    <property type="term" value="F:flavin adenine dinucleotide binding"/>
    <property type="evidence" value="ECO:0007669"/>
    <property type="project" value="InterPro"/>
</dbReference>
<dbReference type="GO" id="GO:0046872">
    <property type="term" value="F:metal ion binding"/>
    <property type="evidence" value="ECO:0007669"/>
    <property type="project" value="UniProtKB-KW"/>
</dbReference>
<dbReference type="GO" id="GO:0016491">
    <property type="term" value="F:oxidoreductase activity"/>
    <property type="evidence" value="ECO:0007669"/>
    <property type="project" value="InterPro"/>
</dbReference>
<dbReference type="GO" id="GO:0044205">
    <property type="term" value="P:'de novo' UMP biosynthetic process"/>
    <property type="evidence" value="ECO:0007669"/>
    <property type="project" value="UniProtKB-UniRule"/>
</dbReference>
<dbReference type="CDD" id="cd06218">
    <property type="entry name" value="DHOD_e_trans"/>
    <property type="match status" value="1"/>
</dbReference>
<dbReference type="FunFam" id="2.10.240.10:FF:000001">
    <property type="entry name" value="Dihydroorotate dehydrogenase B (NAD(+)), electron transfer subunit"/>
    <property type="match status" value="1"/>
</dbReference>
<dbReference type="FunFam" id="2.40.30.10:FF:000045">
    <property type="entry name" value="Dihydroorotate dehydrogenase B (NAD(+)), electron transfer subunit"/>
    <property type="match status" value="1"/>
</dbReference>
<dbReference type="FunFam" id="3.40.50.80:FF:000017">
    <property type="entry name" value="Dihydroorotate dehydrogenase B (NAD(+)), electron transfer subunit"/>
    <property type="match status" value="1"/>
</dbReference>
<dbReference type="Gene3D" id="2.10.240.10">
    <property type="entry name" value="Dihydroorotate dehydrogenase, electron transfer subunit"/>
    <property type="match status" value="1"/>
</dbReference>
<dbReference type="Gene3D" id="3.40.50.80">
    <property type="entry name" value="Nucleotide-binding domain of ferredoxin-NADP reductase (FNR) module"/>
    <property type="match status" value="1"/>
</dbReference>
<dbReference type="Gene3D" id="2.40.30.10">
    <property type="entry name" value="Translation factors"/>
    <property type="match status" value="1"/>
</dbReference>
<dbReference type="HAMAP" id="MF_01211">
    <property type="entry name" value="DHODB_Fe_S_bind"/>
    <property type="match status" value="1"/>
</dbReference>
<dbReference type="InterPro" id="IPR012165">
    <property type="entry name" value="Cyt_c3_hydrogenase_gsu"/>
</dbReference>
<dbReference type="InterPro" id="IPR037117">
    <property type="entry name" value="Dihydroorotate_DH_ele_sf"/>
</dbReference>
<dbReference type="InterPro" id="IPR019480">
    <property type="entry name" value="Dihydroorotate_DH_Fe-S-bd"/>
</dbReference>
<dbReference type="InterPro" id="IPR023455">
    <property type="entry name" value="Dihydroorotate_DHASE_ETsu"/>
</dbReference>
<dbReference type="InterPro" id="IPR017927">
    <property type="entry name" value="FAD-bd_FR_type"/>
</dbReference>
<dbReference type="InterPro" id="IPR039261">
    <property type="entry name" value="FNR_nucleotide-bd"/>
</dbReference>
<dbReference type="InterPro" id="IPR001433">
    <property type="entry name" value="OxRdtase_FAD/NAD-bd"/>
</dbReference>
<dbReference type="InterPro" id="IPR050353">
    <property type="entry name" value="PyrK_electron_transfer"/>
</dbReference>
<dbReference type="InterPro" id="IPR017938">
    <property type="entry name" value="Riboflavin_synthase-like_b-brl"/>
</dbReference>
<dbReference type="NCBIfam" id="NF000797">
    <property type="entry name" value="PRK00054.1-2"/>
    <property type="match status" value="1"/>
</dbReference>
<dbReference type="NCBIfam" id="NF000799">
    <property type="entry name" value="PRK00054.1-4"/>
    <property type="match status" value="1"/>
</dbReference>
<dbReference type="PANTHER" id="PTHR43513">
    <property type="entry name" value="DIHYDROOROTATE DEHYDROGENASE B (NAD(+)), ELECTRON TRANSFER SUBUNIT"/>
    <property type="match status" value="1"/>
</dbReference>
<dbReference type="PANTHER" id="PTHR43513:SF3">
    <property type="entry name" value="DIHYDROOROTATE DEHYDROGENASE B (NAD(+)), ELECTRON TRANSFER SUBUNIT-RELATED"/>
    <property type="match status" value="1"/>
</dbReference>
<dbReference type="Pfam" id="PF10418">
    <property type="entry name" value="DHODB_Fe-S_bind"/>
    <property type="match status" value="1"/>
</dbReference>
<dbReference type="Pfam" id="PF00175">
    <property type="entry name" value="NAD_binding_1"/>
    <property type="match status" value="1"/>
</dbReference>
<dbReference type="PIRSF" id="PIRSF006816">
    <property type="entry name" value="Cyc3_hyd_g"/>
    <property type="match status" value="1"/>
</dbReference>
<dbReference type="PRINTS" id="PR00409">
    <property type="entry name" value="PHDIOXRDTASE"/>
</dbReference>
<dbReference type="SUPFAM" id="SSF52343">
    <property type="entry name" value="Ferredoxin reductase-like, C-terminal NADP-linked domain"/>
    <property type="match status" value="1"/>
</dbReference>
<dbReference type="SUPFAM" id="SSF63380">
    <property type="entry name" value="Riboflavin synthase domain-like"/>
    <property type="match status" value="1"/>
</dbReference>
<dbReference type="PROSITE" id="PS51384">
    <property type="entry name" value="FAD_FR"/>
    <property type="match status" value="1"/>
</dbReference>
<feature type="chain" id="PRO_1000066398" description="Dihydroorotate dehydrogenase B (NAD(+)), electron transfer subunit">
    <location>
        <begin position="1"/>
        <end position="259"/>
    </location>
</feature>
<feature type="domain" description="FAD-binding FR-type" evidence="1">
    <location>
        <begin position="2"/>
        <end position="102"/>
    </location>
</feature>
<feature type="binding site" evidence="1">
    <location>
        <begin position="53"/>
        <end position="56"/>
    </location>
    <ligand>
        <name>FAD</name>
        <dbReference type="ChEBI" id="CHEBI:57692"/>
    </ligand>
</feature>
<feature type="binding site" evidence="1">
    <location>
        <begin position="70"/>
        <end position="72"/>
    </location>
    <ligand>
        <name>FAD</name>
        <dbReference type="ChEBI" id="CHEBI:57692"/>
    </ligand>
</feature>
<feature type="binding site" evidence="1">
    <location>
        <begin position="77"/>
        <end position="78"/>
    </location>
    <ligand>
        <name>FAD</name>
        <dbReference type="ChEBI" id="CHEBI:57692"/>
    </ligand>
</feature>
<feature type="binding site" evidence="1">
    <location>
        <position position="221"/>
    </location>
    <ligand>
        <name>[2Fe-2S] cluster</name>
        <dbReference type="ChEBI" id="CHEBI:190135"/>
    </ligand>
</feature>
<feature type="binding site" evidence="1">
    <location>
        <position position="226"/>
    </location>
    <ligand>
        <name>[2Fe-2S] cluster</name>
        <dbReference type="ChEBI" id="CHEBI:190135"/>
    </ligand>
</feature>
<feature type="binding site" evidence="1">
    <location>
        <position position="229"/>
    </location>
    <ligand>
        <name>[2Fe-2S] cluster</name>
        <dbReference type="ChEBI" id="CHEBI:190135"/>
    </ligand>
</feature>
<feature type="binding site" evidence="1">
    <location>
        <position position="246"/>
    </location>
    <ligand>
        <name>[2Fe-2S] cluster</name>
        <dbReference type="ChEBI" id="CHEBI:190135"/>
    </ligand>
</feature>
<comment type="function">
    <text evidence="1">Responsible for channeling the electrons from the oxidation of dihydroorotate from the FMN redox center in the PyrD type B subunit to the ultimate electron acceptor NAD(+).</text>
</comment>
<comment type="cofactor">
    <cofactor evidence="1">
        <name>[2Fe-2S] cluster</name>
        <dbReference type="ChEBI" id="CHEBI:190135"/>
    </cofactor>
    <text evidence="1">Binds 1 [2Fe-2S] cluster per subunit.</text>
</comment>
<comment type="cofactor">
    <cofactor evidence="1">
        <name>FAD</name>
        <dbReference type="ChEBI" id="CHEBI:57692"/>
    </cofactor>
    <text evidence="1">Binds 1 FAD per subunit.</text>
</comment>
<comment type="pathway">
    <text evidence="1">Pyrimidine metabolism; UMP biosynthesis via de novo pathway; orotate from (S)-dihydroorotate (NAD(+) route): step 1/1.</text>
</comment>
<comment type="subunit">
    <text evidence="1">Heterotetramer of 2 PyrK and 2 PyrD type B subunits.</text>
</comment>
<comment type="similarity">
    <text evidence="1">Belongs to the PyrK family.</text>
</comment>
<proteinExistence type="inferred from homology"/>
<evidence type="ECO:0000255" key="1">
    <source>
        <dbReference type="HAMAP-Rule" id="MF_01211"/>
    </source>
</evidence>
<reference key="1">
    <citation type="journal article" date="2006" name="J. Bacteriol.">
        <title>Pathogenomic sequence analysis of Bacillus cereus and Bacillus thuringiensis isolates closely related to Bacillus anthracis.</title>
        <authorList>
            <person name="Han C.S."/>
            <person name="Xie G."/>
            <person name="Challacombe J.F."/>
            <person name="Altherr M.R."/>
            <person name="Bhotika S.S."/>
            <person name="Bruce D."/>
            <person name="Campbell C.S."/>
            <person name="Campbell M.L."/>
            <person name="Chen J."/>
            <person name="Chertkov O."/>
            <person name="Cleland C."/>
            <person name="Dimitrijevic M."/>
            <person name="Doggett N.A."/>
            <person name="Fawcett J.J."/>
            <person name="Glavina T."/>
            <person name="Goodwin L.A."/>
            <person name="Hill K.K."/>
            <person name="Hitchcock P."/>
            <person name="Jackson P.J."/>
            <person name="Keim P."/>
            <person name="Kewalramani A.R."/>
            <person name="Longmire J."/>
            <person name="Lucas S."/>
            <person name="Malfatti S."/>
            <person name="McMurry K."/>
            <person name="Meincke L.J."/>
            <person name="Misra M."/>
            <person name="Moseman B.L."/>
            <person name="Mundt M."/>
            <person name="Munk A.C."/>
            <person name="Okinaka R.T."/>
            <person name="Parson-Quintana B."/>
            <person name="Reilly L.P."/>
            <person name="Richardson P."/>
            <person name="Robinson D.L."/>
            <person name="Rubin E."/>
            <person name="Saunders E."/>
            <person name="Tapia R."/>
            <person name="Tesmer J.G."/>
            <person name="Thayer N."/>
            <person name="Thompson L.S."/>
            <person name="Tice H."/>
            <person name="Ticknor L.O."/>
            <person name="Wills P.L."/>
            <person name="Brettin T.S."/>
            <person name="Gilna P."/>
        </authorList>
    </citation>
    <scope>NUCLEOTIDE SEQUENCE [LARGE SCALE GENOMIC DNA]</scope>
    <source>
        <strain>97-27</strain>
    </source>
</reference>
<name>PYRK_BACHK</name>
<sequence length="259" mass="28439">MMQKQNMIVVNQKEIAKNIYELVLQGTLVQQMNEPGQFVHIKVAEGIAPLLRRPISICNVDQEKNEFTMLYRAEGQGTKTLATRKQGEMVDVLGPLGHGFPVEEAEAGQTALLVGGGIGVPPLYELSQRLVAKGVRVIHILGFQTKDVVFYEEKFAELGDTYVATVDGTHGTKGFVTDVIDHYGIDFDILYSCGPLAMLRALEGRYKEKKAYISLEERMGCGIGACFACVCHLQEDPSGHSYKKVCSDGPVFPIGEVVL</sequence>
<protein>
    <recommendedName>
        <fullName evidence="1">Dihydroorotate dehydrogenase B (NAD(+)), electron transfer subunit</fullName>
    </recommendedName>
    <alternativeName>
        <fullName evidence="1">Dihydroorotate oxidase B, electron transfer subunit</fullName>
    </alternativeName>
</protein>
<accession>Q6HES9</accession>